<feature type="chain" id="PRO_0000317880" description="Autophagy-related protein 8">
    <location>
        <begin position="1"/>
        <end position="116"/>
    </location>
</feature>
<feature type="propeptide" id="PRO_0000317881" description="Removed in mature form" evidence="1">
    <location>
        <begin position="117"/>
        <end position="118"/>
    </location>
</feature>
<feature type="site" description="Cleavage; by atg4" evidence="1">
    <location>
        <begin position="116"/>
        <end position="117"/>
    </location>
</feature>
<feature type="lipid moiety-binding region" description="Phosphatidylethanolamine amidated glycine" evidence="1">
    <location>
        <position position="116"/>
    </location>
</feature>
<name>ATG8_ASPTN</name>
<organism>
    <name type="scientific">Aspergillus terreus (strain NIH 2624 / FGSC A1156)</name>
    <dbReference type="NCBI Taxonomy" id="341663"/>
    <lineage>
        <taxon>Eukaryota</taxon>
        <taxon>Fungi</taxon>
        <taxon>Dikarya</taxon>
        <taxon>Ascomycota</taxon>
        <taxon>Pezizomycotina</taxon>
        <taxon>Eurotiomycetes</taxon>
        <taxon>Eurotiomycetidae</taxon>
        <taxon>Eurotiales</taxon>
        <taxon>Aspergillaceae</taxon>
        <taxon>Aspergillus</taxon>
        <taxon>Aspergillus subgen. Circumdati</taxon>
    </lineage>
</organism>
<reference key="1">
    <citation type="submission" date="2005-09" db="EMBL/GenBank/DDBJ databases">
        <title>Annotation of the Aspergillus terreus NIH2624 genome.</title>
        <authorList>
            <person name="Birren B.W."/>
            <person name="Lander E.S."/>
            <person name="Galagan J.E."/>
            <person name="Nusbaum C."/>
            <person name="Devon K."/>
            <person name="Henn M."/>
            <person name="Ma L.-J."/>
            <person name="Jaffe D.B."/>
            <person name="Butler J."/>
            <person name="Alvarez P."/>
            <person name="Gnerre S."/>
            <person name="Grabherr M."/>
            <person name="Kleber M."/>
            <person name="Mauceli E.W."/>
            <person name="Brockman W."/>
            <person name="Rounsley S."/>
            <person name="Young S.K."/>
            <person name="LaButti K."/>
            <person name="Pushparaj V."/>
            <person name="DeCaprio D."/>
            <person name="Crawford M."/>
            <person name="Koehrsen M."/>
            <person name="Engels R."/>
            <person name="Montgomery P."/>
            <person name="Pearson M."/>
            <person name="Howarth C."/>
            <person name="Larson L."/>
            <person name="Luoma S."/>
            <person name="White J."/>
            <person name="Alvarado L."/>
            <person name="Kodira C.D."/>
            <person name="Zeng Q."/>
            <person name="Oleary S."/>
            <person name="Yandava C."/>
            <person name="Denning D.W."/>
            <person name="Nierman W.C."/>
            <person name="Milne T."/>
            <person name="Madden K."/>
        </authorList>
    </citation>
    <scope>NUCLEOTIDE SEQUENCE [LARGE SCALE GENOMIC DNA]</scope>
    <source>
        <strain>NIH 2624 / FGSC A1156</strain>
    </source>
</reference>
<protein>
    <recommendedName>
        <fullName>Autophagy-related protein 8</fullName>
    </recommendedName>
    <alternativeName>
        <fullName>Autophagy-related ubiquitin-like modifier atg8</fullName>
    </alternativeName>
</protein>
<comment type="function">
    <text evidence="1">Ubiquitin-like modifier involved in autophagosome formation. With atg4, mediates the delivery of the autophagosomes to the vacuole via the microtubule cytoskeleton. Required for selective autophagic degradation of the nucleus (nucleophagy) as well as for mitophagy which contributes to regulate mitochondrial quantity and quality by eliminating the mitochondria to a basal level to fulfill cellular energy requirements and preventing excess ROS production. Participates also in membrane fusion events that take place in the early secretory pathway. Also involved in endoplasmic reticulum-specific autophagic process and is essential for the survival of cells subjected to severe ER stress. The atg8-PE conjugate mediates tethering between adjacent membranes and stimulates membrane hemifusion, leading to expansion of the autophagosomal membrane during autophagy.</text>
</comment>
<comment type="subcellular location">
    <subcellularLocation>
        <location evidence="1">Cytoplasmic vesicle</location>
        <location evidence="1">Autophagosome membrane</location>
        <topology evidence="1">Lipid-anchor</topology>
    </subcellularLocation>
    <subcellularLocation>
        <location evidence="1">Vacuole membrane</location>
        <topology evidence="1">Lipid-anchor</topology>
    </subcellularLocation>
</comment>
<comment type="PTM">
    <text evidence="1">The C-terminal 2 residues are removed by atg4 to expose Gly-116 at the C-terminus. The c-terminal Gly is then amidated with phosphatidylethanolamine by an activating system similar to that for ubiquitin.</text>
</comment>
<comment type="similarity">
    <text evidence="2">Belongs to the ATG8 family.</text>
</comment>
<evidence type="ECO:0000250" key="1">
    <source>
        <dbReference type="UniProtKB" id="P38182"/>
    </source>
</evidence>
<evidence type="ECO:0000305" key="2"/>
<gene>
    <name type="primary">atg8</name>
    <name type="ORF">ATEG_10180</name>
</gene>
<proteinExistence type="inferred from homology"/>
<accession>Q0C804</accession>
<keyword id="KW-0072">Autophagy</keyword>
<keyword id="KW-0968">Cytoplasmic vesicle</keyword>
<keyword id="KW-0449">Lipoprotein</keyword>
<keyword id="KW-0472">Membrane</keyword>
<keyword id="KW-0653">Protein transport</keyword>
<keyword id="KW-1185">Reference proteome</keyword>
<keyword id="KW-0813">Transport</keyword>
<keyword id="KW-0833">Ubl conjugation pathway</keyword>
<keyword id="KW-0926">Vacuole</keyword>
<dbReference type="EMBL" id="CH476609">
    <property type="protein sequence ID" value="EAU29629.1"/>
    <property type="molecule type" value="Genomic_DNA"/>
</dbReference>
<dbReference type="RefSeq" id="XP_001209482.1">
    <property type="nucleotide sequence ID" value="XM_001209482.1"/>
</dbReference>
<dbReference type="SMR" id="Q0C804"/>
<dbReference type="STRING" id="341663.Q0C804"/>
<dbReference type="EnsemblFungi" id="EAU29629">
    <property type="protein sequence ID" value="EAU29629"/>
    <property type="gene ID" value="ATEG_10180"/>
</dbReference>
<dbReference type="GeneID" id="4319662"/>
<dbReference type="VEuPathDB" id="FungiDB:ATEG_10180"/>
<dbReference type="eggNOG" id="KOG1654">
    <property type="taxonomic scope" value="Eukaryota"/>
</dbReference>
<dbReference type="HOGENOM" id="CLU_119276_0_1_1"/>
<dbReference type="OMA" id="AVYQEHK"/>
<dbReference type="OrthoDB" id="6738456at2759"/>
<dbReference type="Proteomes" id="UP000007963">
    <property type="component" value="Unassembled WGS sequence"/>
</dbReference>
<dbReference type="GO" id="GO:0000421">
    <property type="term" value="C:autophagosome membrane"/>
    <property type="evidence" value="ECO:0007669"/>
    <property type="project" value="UniProtKB-SubCell"/>
</dbReference>
<dbReference type="GO" id="GO:0031410">
    <property type="term" value="C:cytoplasmic vesicle"/>
    <property type="evidence" value="ECO:0007669"/>
    <property type="project" value="UniProtKB-KW"/>
</dbReference>
<dbReference type="GO" id="GO:0006914">
    <property type="term" value="P:autophagy"/>
    <property type="evidence" value="ECO:0007669"/>
    <property type="project" value="UniProtKB-KW"/>
</dbReference>
<dbReference type="GO" id="GO:0015031">
    <property type="term" value="P:protein transport"/>
    <property type="evidence" value="ECO:0007669"/>
    <property type="project" value="UniProtKB-KW"/>
</dbReference>
<dbReference type="CDD" id="cd16128">
    <property type="entry name" value="Ubl_ATG8"/>
    <property type="match status" value="1"/>
</dbReference>
<dbReference type="FunFam" id="3.10.20.90:FF:000010">
    <property type="entry name" value="Autophagy-related protein"/>
    <property type="match status" value="1"/>
</dbReference>
<dbReference type="Gene3D" id="3.10.20.90">
    <property type="entry name" value="Phosphatidylinositol 3-kinase Catalytic Subunit, Chain A, domain 1"/>
    <property type="match status" value="1"/>
</dbReference>
<dbReference type="InterPro" id="IPR004241">
    <property type="entry name" value="Atg8-like"/>
</dbReference>
<dbReference type="InterPro" id="IPR029071">
    <property type="entry name" value="Ubiquitin-like_domsf"/>
</dbReference>
<dbReference type="PANTHER" id="PTHR10969">
    <property type="entry name" value="MICROTUBULE-ASSOCIATED PROTEINS 1A/1B LIGHT CHAIN 3-RELATED"/>
    <property type="match status" value="1"/>
</dbReference>
<dbReference type="Pfam" id="PF02991">
    <property type="entry name" value="ATG8"/>
    <property type="match status" value="1"/>
</dbReference>
<dbReference type="SUPFAM" id="SSF54236">
    <property type="entry name" value="Ubiquitin-like"/>
    <property type="match status" value="1"/>
</dbReference>
<sequence length="118" mass="13738">MRSKFKDEHPFEKRKAEAERIRQKYADRIPVICEKVEKSDIATIDKKKYLVPADLTVGQFVYVIRKRIKLSPEKAIFIFVDEVLPPTAALMSSIYEEHKDEDGFLYITYSGENTFGDC</sequence>